<sequence>MSLKKSPFFELRSGSVDTLLFTVKTTDLDALRAELVKRFEATPEFFADDVVAIDVRRLADGERVALADIRQMLNDVRMRPVGVVALATQGWAGEAGLPLLEARDRRAPAAKPADEAEPAAVPAVETAAAPAAAAAPEQSSDPAPTLVQAGGQTLVIDRPLRSGQQIYAKGDLVVLAPVSHGAEIIAEGNIHIYAPLRGRALAGVHGNHDARIFCTCLEPELISIAGIYRTTENPLPADVLGKSVQIRLEEEKLMIEPLRLT</sequence>
<name>MINC_BURO0</name>
<organism>
    <name type="scientific">Burkholderia orbicola (strain MC0-3)</name>
    <dbReference type="NCBI Taxonomy" id="406425"/>
    <lineage>
        <taxon>Bacteria</taxon>
        <taxon>Pseudomonadati</taxon>
        <taxon>Pseudomonadota</taxon>
        <taxon>Betaproteobacteria</taxon>
        <taxon>Burkholderiales</taxon>
        <taxon>Burkholderiaceae</taxon>
        <taxon>Burkholderia</taxon>
        <taxon>Burkholderia cepacia complex</taxon>
        <taxon>Burkholderia orbicola</taxon>
    </lineage>
</organism>
<comment type="function">
    <text evidence="1">Cell division inhibitor that blocks the formation of polar Z ring septums. Rapidly oscillates between the poles of the cell to destabilize FtsZ filaments that have formed before they mature into polar Z rings. Prevents FtsZ polymerization.</text>
</comment>
<comment type="subunit">
    <text evidence="1">Interacts with MinD and FtsZ.</text>
</comment>
<comment type="similarity">
    <text evidence="1">Belongs to the MinC family.</text>
</comment>
<dbReference type="EMBL" id="CP000958">
    <property type="protein sequence ID" value="ACA90120.1"/>
    <property type="molecule type" value="Genomic_DNA"/>
</dbReference>
<dbReference type="RefSeq" id="WP_012328092.1">
    <property type="nucleotide sequence ID" value="NC_010508.1"/>
</dbReference>
<dbReference type="SMR" id="B1JXA1"/>
<dbReference type="GeneID" id="83047734"/>
<dbReference type="KEGG" id="bcm:Bcenmc03_0943"/>
<dbReference type="HOGENOM" id="CLU_067812_0_1_4"/>
<dbReference type="Proteomes" id="UP000002169">
    <property type="component" value="Chromosome 1"/>
</dbReference>
<dbReference type="GO" id="GO:0000902">
    <property type="term" value="P:cell morphogenesis"/>
    <property type="evidence" value="ECO:0007669"/>
    <property type="project" value="InterPro"/>
</dbReference>
<dbReference type="GO" id="GO:0000917">
    <property type="term" value="P:division septum assembly"/>
    <property type="evidence" value="ECO:0007669"/>
    <property type="project" value="UniProtKB-KW"/>
</dbReference>
<dbReference type="GO" id="GO:0051302">
    <property type="term" value="P:regulation of cell division"/>
    <property type="evidence" value="ECO:0007669"/>
    <property type="project" value="InterPro"/>
</dbReference>
<dbReference type="GO" id="GO:1901891">
    <property type="term" value="P:regulation of cell septum assembly"/>
    <property type="evidence" value="ECO:0007669"/>
    <property type="project" value="InterPro"/>
</dbReference>
<dbReference type="Gene3D" id="2.160.20.70">
    <property type="match status" value="1"/>
</dbReference>
<dbReference type="Gene3D" id="3.30.70.260">
    <property type="match status" value="1"/>
</dbReference>
<dbReference type="HAMAP" id="MF_00267">
    <property type="entry name" value="MinC"/>
    <property type="match status" value="1"/>
</dbReference>
<dbReference type="InterPro" id="IPR016098">
    <property type="entry name" value="CAP/MinC_C"/>
</dbReference>
<dbReference type="InterPro" id="IPR013033">
    <property type="entry name" value="MinC"/>
</dbReference>
<dbReference type="InterPro" id="IPR036145">
    <property type="entry name" value="MinC_C_sf"/>
</dbReference>
<dbReference type="InterPro" id="IPR007874">
    <property type="entry name" value="MinC_N"/>
</dbReference>
<dbReference type="InterPro" id="IPR005526">
    <property type="entry name" value="Septum_form_inhib_MinC_C"/>
</dbReference>
<dbReference type="NCBIfam" id="TIGR01222">
    <property type="entry name" value="minC"/>
    <property type="match status" value="1"/>
</dbReference>
<dbReference type="PANTHER" id="PTHR34108">
    <property type="entry name" value="SEPTUM SITE-DETERMINING PROTEIN MINC"/>
    <property type="match status" value="1"/>
</dbReference>
<dbReference type="PANTHER" id="PTHR34108:SF1">
    <property type="entry name" value="SEPTUM SITE-DETERMINING PROTEIN MINC"/>
    <property type="match status" value="1"/>
</dbReference>
<dbReference type="Pfam" id="PF03775">
    <property type="entry name" value="MinC_C"/>
    <property type="match status" value="1"/>
</dbReference>
<dbReference type="Pfam" id="PF05209">
    <property type="entry name" value="MinC_N"/>
    <property type="match status" value="1"/>
</dbReference>
<dbReference type="SUPFAM" id="SSF63848">
    <property type="entry name" value="Cell-division inhibitor MinC, C-terminal domain"/>
    <property type="match status" value="1"/>
</dbReference>
<evidence type="ECO:0000255" key="1">
    <source>
        <dbReference type="HAMAP-Rule" id="MF_00267"/>
    </source>
</evidence>
<evidence type="ECO:0000256" key="2">
    <source>
        <dbReference type="SAM" id="MobiDB-lite"/>
    </source>
</evidence>
<feature type="chain" id="PRO_1000114270" description="Probable septum site-determining protein MinC">
    <location>
        <begin position="1"/>
        <end position="261"/>
    </location>
</feature>
<feature type="region of interest" description="Disordered" evidence="2">
    <location>
        <begin position="106"/>
        <end position="144"/>
    </location>
</feature>
<feature type="compositionally biased region" description="Low complexity" evidence="2">
    <location>
        <begin position="118"/>
        <end position="144"/>
    </location>
</feature>
<reference key="1">
    <citation type="submission" date="2008-02" db="EMBL/GenBank/DDBJ databases">
        <title>Complete sequence of chromosome 1 of Burkholderia cenocepacia MC0-3.</title>
        <authorList>
            <person name="Copeland A."/>
            <person name="Lucas S."/>
            <person name="Lapidus A."/>
            <person name="Barry K."/>
            <person name="Bruce D."/>
            <person name="Goodwin L."/>
            <person name="Glavina del Rio T."/>
            <person name="Dalin E."/>
            <person name="Tice H."/>
            <person name="Pitluck S."/>
            <person name="Chain P."/>
            <person name="Malfatti S."/>
            <person name="Shin M."/>
            <person name="Vergez L."/>
            <person name="Schmutz J."/>
            <person name="Larimer F."/>
            <person name="Land M."/>
            <person name="Hauser L."/>
            <person name="Kyrpides N."/>
            <person name="Mikhailova N."/>
            <person name="Tiedje J."/>
            <person name="Richardson P."/>
        </authorList>
    </citation>
    <scope>NUCLEOTIDE SEQUENCE [LARGE SCALE GENOMIC DNA]</scope>
    <source>
        <strain>MC0-3</strain>
    </source>
</reference>
<keyword id="KW-0131">Cell cycle</keyword>
<keyword id="KW-0132">Cell division</keyword>
<keyword id="KW-0717">Septation</keyword>
<proteinExistence type="inferred from homology"/>
<accession>B1JXA1</accession>
<protein>
    <recommendedName>
        <fullName evidence="1">Probable septum site-determining protein MinC</fullName>
    </recommendedName>
</protein>
<gene>
    <name evidence="1" type="primary">minC</name>
    <name type="ordered locus">Bcenmc03_0943</name>
</gene>